<reference key="1">
    <citation type="journal article" date="2009" name="Genome Res.">
        <title>Complete genome of the cellulolytic thermophile Acidothermus cellulolyticus 11B provides insights into its ecophysiological and evolutionary adaptations.</title>
        <authorList>
            <person name="Barabote R.D."/>
            <person name="Xie G."/>
            <person name="Leu D.H."/>
            <person name="Normand P."/>
            <person name="Necsulea A."/>
            <person name="Daubin V."/>
            <person name="Medigue C."/>
            <person name="Adney W.S."/>
            <person name="Xu X.C."/>
            <person name="Lapidus A."/>
            <person name="Parales R.E."/>
            <person name="Detter C."/>
            <person name="Pujic P."/>
            <person name="Bruce D."/>
            <person name="Lavire C."/>
            <person name="Challacombe J.F."/>
            <person name="Brettin T.S."/>
            <person name="Berry A.M."/>
        </authorList>
    </citation>
    <scope>NUCLEOTIDE SEQUENCE [LARGE SCALE GENOMIC DNA]</scope>
    <source>
        <strain>ATCC 43068 / DSM 8971 / 11B</strain>
    </source>
</reference>
<proteinExistence type="inferred from homology"/>
<protein>
    <recommendedName>
        <fullName evidence="1">Endoribonuclease YbeY</fullName>
        <ecNumber evidence="1">3.1.-.-</ecNumber>
    </recommendedName>
</protein>
<gene>
    <name evidence="1" type="primary">ybeY</name>
    <name type="ordered locus">Acel_0790</name>
</gene>
<sequence length="164" mass="18459">MTVEIANESGVDVDELRLLDLARYVLDRMRIHPLAELSILLVDEGEMAVLHERWMDEPGPTDVLSFPMDELRPGRLDVEIDPDAEPAVLGDVVLCPAVAKQQARHAGHSTQDELELLTVHGILHLLGYDHAEEDAEREMFALQSELLTAWRADRRIAGRPGRKR</sequence>
<feature type="chain" id="PRO_0000284149" description="Endoribonuclease YbeY">
    <location>
        <begin position="1"/>
        <end position="164"/>
    </location>
</feature>
<feature type="binding site" evidence="1">
    <location>
        <position position="120"/>
    </location>
    <ligand>
        <name>Zn(2+)</name>
        <dbReference type="ChEBI" id="CHEBI:29105"/>
        <note>catalytic</note>
    </ligand>
</feature>
<feature type="binding site" evidence="1">
    <location>
        <position position="124"/>
    </location>
    <ligand>
        <name>Zn(2+)</name>
        <dbReference type="ChEBI" id="CHEBI:29105"/>
        <note>catalytic</note>
    </ligand>
</feature>
<feature type="binding site" evidence="1">
    <location>
        <position position="130"/>
    </location>
    <ligand>
        <name>Zn(2+)</name>
        <dbReference type="ChEBI" id="CHEBI:29105"/>
        <note>catalytic</note>
    </ligand>
</feature>
<organism>
    <name type="scientific">Acidothermus cellulolyticus (strain ATCC 43068 / DSM 8971 / 11B)</name>
    <dbReference type="NCBI Taxonomy" id="351607"/>
    <lineage>
        <taxon>Bacteria</taxon>
        <taxon>Bacillati</taxon>
        <taxon>Actinomycetota</taxon>
        <taxon>Actinomycetes</taxon>
        <taxon>Acidothermales</taxon>
        <taxon>Acidothermaceae</taxon>
        <taxon>Acidothermus</taxon>
    </lineage>
</organism>
<comment type="function">
    <text evidence="1">Single strand-specific metallo-endoribonuclease involved in late-stage 70S ribosome quality control and in maturation of the 3' terminus of the 16S rRNA.</text>
</comment>
<comment type="cofactor">
    <cofactor evidence="1">
        <name>Zn(2+)</name>
        <dbReference type="ChEBI" id="CHEBI:29105"/>
    </cofactor>
    <text evidence="1">Binds 1 zinc ion.</text>
</comment>
<comment type="subcellular location">
    <subcellularLocation>
        <location evidence="1">Cytoplasm</location>
    </subcellularLocation>
</comment>
<comment type="similarity">
    <text evidence="1">Belongs to the endoribonuclease YbeY family.</text>
</comment>
<name>YBEY_ACIC1</name>
<dbReference type="EC" id="3.1.-.-" evidence="1"/>
<dbReference type="EMBL" id="CP000481">
    <property type="protein sequence ID" value="ABK52563.1"/>
    <property type="molecule type" value="Genomic_DNA"/>
</dbReference>
<dbReference type="RefSeq" id="WP_011719626.1">
    <property type="nucleotide sequence ID" value="NC_008578.1"/>
</dbReference>
<dbReference type="SMR" id="A0LT03"/>
<dbReference type="FunCoup" id="A0LT03">
    <property type="interactions" value="65"/>
</dbReference>
<dbReference type="STRING" id="351607.Acel_0790"/>
<dbReference type="KEGG" id="ace:Acel_0790"/>
<dbReference type="eggNOG" id="COG0319">
    <property type="taxonomic scope" value="Bacteria"/>
</dbReference>
<dbReference type="HOGENOM" id="CLU_106710_3_2_11"/>
<dbReference type="InParanoid" id="A0LT03"/>
<dbReference type="OrthoDB" id="9807740at2"/>
<dbReference type="Proteomes" id="UP000008221">
    <property type="component" value="Chromosome"/>
</dbReference>
<dbReference type="GO" id="GO:0005737">
    <property type="term" value="C:cytoplasm"/>
    <property type="evidence" value="ECO:0007669"/>
    <property type="project" value="UniProtKB-SubCell"/>
</dbReference>
<dbReference type="GO" id="GO:0004222">
    <property type="term" value="F:metalloendopeptidase activity"/>
    <property type="evidence" value="ECO:0007669"/>
    <property type="project" value="InterPro"/>
</dbReference>
<dbReference type="GO" id="GO:0004521">
    <property type="term" value="F:RNA endonuclease activity"/>
    <property type="evidence" value="ECO:0007669"/>
    <property type="project" value="UniProtKB-UniRule"/>
</dbReference>
<dbReference type="GO" id="GO:0008270">
    <property type="term" value="F:zinc ion binding"/>
    <property type="evidence" value="ECO:0007669"/>
    <property type="project" value="UniProtKB-UniRule"/>
</dbReference>
<dbReference type="GO" id="GO:0006364">
    <property type="term" value="P:rRNA processing"/>
    <property type="evidence" value="ECO:0007669"/>
    <property type="project" value="UniProtKB-UniRule"/>
</dbReference>
<dbReference type="Gene3D" id="3.40.390.30">
    <property type="entry name" value="Metalloproteases ('zincins'), catalytic domain"/>
    <property type="match status" value="1"/>
</dbReference>
<dbReference type="HAMAP" id="MF_00009">
    <property type="entry name" value="Endoribonucl_YbeY"/>
    <property type="match status" value="1"/>
</dbReference>
<dbReference type="InterPro" id="IPR023091">
    <property type="entry name" value="MetalPrtase_cat_dom_sf_prd"/>
</dbReference>
<dbReference type="InterPro" id="IPR002036">
    <property type="entry name" value="YbeY"/>
</dbReference>
<dbReference type="InterPro" id="IPR020549">
    <property type="entry name" value="YbeY_CS"/>
</dbReference>
<dbReference type="NCBIfam" id="TIGR00043">
    <property type="entry name" value="rRNA maturation RNase YbeY"/>
    <property type="match status" value="1"/>
</dbReference>
<dbReference type="PANTHER" id="PTHR46986">
    <property type="entry name" value="ENDORIBONUCLEASE YBEY, CHLOROPLASTIC"/>
    <property type="match status" value="1"/>
</dbReference>
<dbReference type="PANTHER" id="PTHR46986:SF1">
    <property type="entry name" value="ENDORIBONUCLEASE YBEY, CHLOROPLASTIC"/>
    <property type="match status" value="1"/>
</dbReference>
<dbReference type="Pfam" id="PF02130">
    <property type="entry name" value="YbeY"/>
    <property type="match status" value="1"/>
</dbReference>
<dbReference type="SUPFAM" id="SSF55486">
    <property type="entry name" value="Metalloproteases ('zincins'), catalytic domain"/>
    <property type="match status" value="1"/>
</dbReference>
<dbReference type="PROSITE" id="PS01306">
    <property type="entry name" value="UPF0054"/>
    <property type="match status" value="1"/>
</dbReference>
<keyword id="KW-0963">Cytoplasm</keyword>
<keyword id="KW-0255">Endonuclease</keyword>
<keyword id="KW-0378">Hydrolase</keyword>
<keyword id="KW-0479">Metal-binding</keyword>
<keyword id="KW-0540">Nuclease</keyword>
<keyword id="KW-1185">Reference proteome</keyword>
<keyword id="KW-0690">Ribosome biogenesis</keyword>
<keyword id="KW-0698">rRNA processing</keyword>
<keyword id="KW-0862">Zinc</keyword>
<evidence type="ECO:0000255" key="1">
    <source>
        <dbReference type="HAMAP-Rule" id="MF_00009"/>
    </source>
</evidence>
<accession>A0LT03</accession>